<gene>
    <name evidence="6" type="primary">nlrp1</name>
    <name type="ORF">si:ch211-66k16.28</name>
</gene>
<keyword id="KW-0067">ATP-binding</keyword>
<keyword id="KW-0963">Cytoplasm</keyword>
<keyword id="KW-0378">Hydrolase</keyword>
<keyword id="KW-0391">Immunity</keyword>
<keyword id="KW-1271">Inflammasome</keyword>
<keyword id="KW-0395">Inflammatory response</keyword>
<keyword id="KW-0399">Innate immunity</keyword>
<keyword id="KW-1210">Necrosis</keyword>
<keyword id="KW-0547">Nucleotide-binding</keyword>
<keyword id="KW-0645">Protease</keyword>
<keyword id="KW-1185">Reference proteome</keyword>
<keyword id="KW-0677">Repeat</keyword>
<keyword id="KW-0832">Ubl conjugation</keyword>
<protein>
    <recommendedName>
        <fullName evidence="7">NACHT, LRR and PYD domains-containing protein 1 homolog</fullName>
        <ecNumber evidence="1">3.4.-.-</ecNumber>
    </recommendedName>
    <component>
        <recommendedName>
            <fullName evidence="7">NACHT, LRR and PYD domains-containing protein 1, C-terminus</fullName>
            <shortName evidence="1">NLRP1-CT</shortName>
        </recommendedName>
    </component>
    <component>
        <recommendedName>
            <fullName evidence="7">NACHT, LRR and PYD domains-containing protein 1, N-terminus</fullName>
            <shortName evidence="1">NLRP1-NT</shortName>
        </recommendedName>
    </component>
</protein>
<proteinExistence type="evidence at protein level"/>
<reference evidence="8" key="1">
    <citation type="journal article" date="2018" name="J. Immunol.">
        <title>Characterization of an NLRP1 Inflammasome from Zebrafish Reveals a Unique Sequential Activation Mechanism Underlying Inflammatory Caspases in Ancient Vertebrates.</title>
        <authorList>
            <person name="Li J.Y."/>
            <person name="Gao K."/>
            <person name="Shao T."/>
            <person name="Fan D.D."/>
            <person name="Hu C.B."/>
            <person name="Sun C.C."/>
            <person name="Dong W.R."/>
            <person name="Lin A.F."/>
            <person name="Xiang L.X."/>
            <person name="Shao J.Z."/>
        </authorList>
    </citation>
    <scope>NUCLEOTIDE SEQUENCE [MRNA]</scope>
    <scope>FUNCTION</scope>
    <scope>SUBUNIT</scope>
    <scope>IDENTIFICATION IN INFLAMMASOME</scope>
    <scope>INTERACTION WITH PYCARD</scope>
    <scope>TISSUE SPECIFICITY</scope>
    <scope>DEVELOPMENTAL STAGE</scope>
    <scope>INDUCTION BY E.TARDA</scope>
    <scope>DOMAIN</scope>
    <scope>DISRUPTION PHENOTYPE</scope>
</reference>
<reference evidence="9" key="2">
    <citation type="journal article" date="2013" name="Nature">
        <title>The zebrafish reference genome sequence and its relationship to the human genome.</title>
        <authorList>
            <person name="Howe K."/>
            <person name="Clark M.D."/>
            <person name="Torroja C.F."/>
            <person name="Torrance J."/>
            <person name="Berthelot C."/>
            <person name="Muffato M."/>
            <person name="Collins J.E."/>
            <person name="Humphray S."/>
            <person name="McLaren K."/>
            <person name="Matthews L."/>
            <person name="McLaren S."/>
            <person name="Sealy I."/>
            <person name="Caccamo M."/>
            <person name="Churcher C."/>
            <person name="Scott C."/>
            <person name="Barrett J.C."/>
            <person name="Koch R."/>
            <person name="Rauch G.J."/>
            <person name="White S."/>
            <person name="Chow W."/>
            <person name="Kilian B."/>
            <person name="Quintais L.T."/>
            <person name="Guerra-Assuncao J.A."/>
            <person name="Zhou Y."/>
            <person name="Gu Y."/>
            <person name="Yen J."/>
            <person name="Vogel J.H."/>
            <person name="Eyre T."/>
            <person name="Redmond S."/>
            <person name="Banerjee R."/>
            <person name="Chi J."/>
            <person name="Fu B."/>
            <person name="Langley E."/>
            <person name="Maguire S.F."/>
            <person name="Laird G.K."/>
            <person name="Lloyd D."/>
            <person name="Kenyon E."/>
            <person name="Donaldson S."/>
            <person name="Sehra H."/>
            <person name="Almeida-King J."/>
            <person name="Loveland J."/>
            <person name="Trevanion S."/>
            <person name="Jones M."/>
            <person name="Quail M."/>
            <person name="Willey D."/>
            <person name="Hunt A."/>
            <person name="Burton J."/>
            <person name="Sims S."/>
            <person name="McLay K."/>
            <person name="Plumb B."/>
            <person name="Davis J."/>
            <person name="Clee C."/>
            <person name="Oliver K."/>
            <person name="Clark R."/>
            <person name="Riddle C."/>
            <person name="Elliot D."/>
            <person name="Threadgold G."/>
            <person name="Harden G."/>
            <person name="Ware D."/>
            <person name="Begum S."/>
            <person name="Mortimore B."/>
            <person name="Kerry G."/>
            <person name="Heath P."/>
            <person name="Phillimore B."/>
            <person name="Tracey A."/>
            <person name="Corby N."/>
            <person name="Dunn M."/>
            <person name="Johnson C."/>
            <person name="Wood J."/>
            <person name="Clark S."/>
            <person name="Pelan S."/>
            <person name="Griffiths G."/>
            <person name="Smith M."/>
            <person name="Glithero R."/>
            <person name="Howden P."/>
            <person name="Barker N."/>
            <person name="Lloyd C."/>
            <person name="Stevens C."/>
            <person name="Harley J."/>
            <person name="Holt K."/>
            <person name="Panagiotidis G."/>
            <person name="Lovell J."/>
            <person name="Beasley H."/>
            <person name="Henderson C."/>
            <person name="Gordon D."/>
            <person name="Auger K."/>
            <person name="Wright D."/>
            <person name="Collins J."/>
            <person name="Raisen C."/>
            <person name="Dyer L."/>
            <person name="Leung K."/>
            <person name="Robertson L."/>
            <person name="Ambridge K."/>
            <person name="Leongamornlert D."/>
            <person name="McGuire S."/>
            <person name="Gilderthorp R."/>
            <person name="Griffiths C."/>
            <person name="Manthravadi D."/>
            <person name="Nichol S."/>
            <person name="Barker G."/>
            <person name="Whitehead S."/>
            <person name="Kay M."/>
            <person name="Brown J."/>
            <person name="Murnane C."/>
            <person name="Gray E."/>
            <person name="Humphries M."/>
            <person name="Sycamore N."/>
            <person name="Barker D."/>
            <person name="Saunders D."/>
            <person name="Wallis J."/>
            <person name="Babbage A."/>
            <person name="Hammond S."/>
            <person name="Mashreghi-Mohammadi M."/>
            <person name="Barr L."/>
            <person name="Martin S."/>
            <person name="Wray P."/>
            <person name="Ellington A."/>
            <person name="Matthews N."/>
            <person name="Ellwood M."/>
            <person name="Woodmansey R."/>
            <person name="Clark G."/>
            <person name="Cooper J."/>
            <person name="Tromans A."/>
            <person name="Grafham D."/>
            <person name="Skuce C."/>
            <person name="Pandian R."/>
            <person name="Andrews R."/>
            <person name="Harrison E."/>
            <person name="Kimberley A."/>
            <person name="Garnett J."/>
            <person name="Fosker N."/>
            <person name="Hall R."/>
            <person name="Garner P."/>
            <person name="Kelly D."/>
            <person name="Bird C."/>
            <person name="Palmer S."/>
            <person name="Gehring I."/>
            <person name="Berger A."/>
            <person name="Dooley C.M."/>
            <person name="Ersan-Urun Z."/>
            <person name="Eser C."/>
            <person name="Geiger H."/>
            <person name="Geisler M."/>
            <person name="Karotki L."/>
            <person name="Kirn A."/>
            <person name="Konantz J."/>
            <person name="Konantz M."/>
            <person name="Oberlander M."/>
            <person name="Rudolph-Geiger S."/>
            <person name="Teucke M."/>
            <person name="Lanz C."/>
            <person name="Raddatz G."/>
            <person name="Osoegawa K."/>
            <person name="Zhu B."/>
            <person name="Rapp A."/>
            <person name="Widaa S."/>
            <person name="Langford C."/>
            <person name="Yang F."/>
            <person name="Schuster S.C."/>
            <person name="Carter N.P."/>
            <person name="Harrow J."/>
            <person name="Ning Z."/>
            <person name="Herrero J."/>
            <person name="Searle S.M."/>
            <person name="Enright A."/>
            <person name="Geisler R."/>
            <person name="Plasterk R.H."/>
            <person name="Lee C."/>
            <person name="Westerfield M."/>
            <person name="de Jong P.J."/>
            <person name="Zon L.I."/>
            <person name="Postlethwait J.H."/>
            <person name="Nusslein-Volhard C."/>
            <person name="Hubbard T.J."/>
            <person name="Roest Crollius H."/>
            <person name="Rogers J."/>
            <person name="Stemple D.L."/>
        </authorList>
    </citation>
    <scope>NUCLEOTIDE SEQUENCE [LARGE SCALE GENOMIC DNA]</scope>
    <source>
        <strain evidence="9">Tuebingen</strain>
    </source>
</reference>
<organism evidence="8">
    <name type="scientific">Danio rerio</name>
    <name type="common">Zebrafish</name>
    <name type="synonym">Brachydanio rerio</name>
    <dbReference type="NCBI Taxonomy" id="7955"/>
    <lineage>
        <taxon>Eukaryota</taxon>
        <taxon>Metazoa</taxon>
        <taxon>Chordata</taxon>
        <taxon>Craniata</taxon>
        <taxon>Vertebrata</taxon>
        <taxon>Euteleostomi</taxon>
        <taxon>Actinopterygii</taxon>
        <taxon>Neopterygii</taxon>
        <taxon>Teleostei</taxon>
        <taxon>Ostariophysi</taxon>
        <taxon>Cypriniformes</taxon>
        <taxon>Danionidae</taxon>
        <taxon>Danioninae</taxon>
        <taxon>Danio</taxon>
    </lineage>
</organism>
<comment type="function">
    <text evidence="1 5">Acts as the sensor component of the nlrp1 inflammasome, which mediates inflammasome activation in response to various pathogen-associated signals, leading to subsequent pyroptosis (PubMed:30150286). Inflammasomes are supramolecular complexes that assemble in the cytosol in response to pathogens and other damage-associated signals and play critical roles in innate immunity and inflammation (PubMed:30150286). Acts as a recognition receptor (PRR): recognizes specific pathogens and other damage-associated signals, and mediates the formation of the inflammasome polymeric complex (By similarity). In response to pathogen-associated signals, the N-terminal part of nlrp1 is degraded by the proteasome, releasing the cleaved C-terminal part of the protein (NACHT, LRR and PYD domains-containing protein 1, C-terminus), which polymerizes to initiate the formation of the inflammasome complex: the inflammasome recruits and activate pro-inflammatory caspases (caspa and/or caspb), leading to pyroptosis (By similarity).</text>
</comment>
<comment type="function">
    <molecule>NACHT, LRR and PYD domains-containing protein 1 homolog</molecule>
    <text evidence="1">Constitutes the precursor of the nlrp1 inflammasome, which mediates autoproteolytic processing within the FIIND domain to generate the N-terminal and C-terminal parts, which are associated non-covalently in absence of pathogens and other damage-associated signals.</text>
</comment>
<comment type="function">
    <molecule>NACHT, LRR and PYD domains-containing protein 1, N-terminus</molecule>
    <text evidence="1">Regulatory part that prevents formation of the nlrp1 inflammasome: in absence of pathogens and other damage-associated signals, interacts with the C-terminal part of nlrp1 (NACHT, LRR and PYD domains-containing protein 1, C-terminus), preventing activation of the nlrp1 inflammasome (By similarity). In response to pathogen-associated signals, this part is ubiquitinated and degraded by the proteasome, releasing the cleaved C-terminal part of the protein, which polymerizes and forms the nlrp1 inflammasome (By similarity).</text>
</comment>
<comment type="function">
    <molecule>NACHT, LRR and PYD domains-containing protein 1, C-terminus</molecule>
    <text evidence="1">Constitutes the active part of the nlrp1 inflammasome (By similarity). In absence of pathogens and other damage-associated signals, interacts with the N-terminal part of nlrp1 (NACHT, LRR and PYD domains-containing protein 1, N-terminus), preventing activation of the nlrp1 inflammasome (By similarity). In response to pathogen-associated signals, the N-terminal part of nlrp1 is degraded by the proteasome, releasing this form, which polymerizes to form the nlrp1 inflammasome complex: the nlrp1 inflammasome complex then directly recruits and activates pro-inflammatory caspases (caspa and/or caspb) activation, leading to subsequent pyroptosis (By similarity).</text>
</comment>
<comment type="activity regulation">
    <text evidence="1">nlrp1 inflammasome is activated by pathogens and other damage-associated signals: activation promotes ubiquitination and degradation of the N-terminal part, releasing the cleaved C-terminal part of the protein (NACHT, LRR and PYD domains-containing protein 1, C-terminus), which polymerizes and forms the nlrp1 inflammasome.</text>
</comment>
<comment type="subunit">
    <molecule>NACHT, LRR and PYD domains-containing protein 1, N-terminus</molecule>
    <text evidence="1">Interacts with the C-terminal part of nlrp1 (NACHT, LRR and PYD domains-containing protein 1, C-terminus) in absence of pathogens and other damage-associated signals.</text>
</comment>
<comment type="subunit">
    <molecule>NACHT, LRR and PYD domains-containing protein 1, C-terminus</molecule>
    <text evidence="1 5">Interacts with the N-terminal part of nlrp1 (NACHT, LRR and PYD domains-containing protein 1, N-terminus) in absence of pathogens and other damage-associated signals (By similarity). Homomultimer; forms the nlrp1 inflammasome polymeric complex, a filament composed of homopolymers of this form in response to pathogens and other damage-associated signals (By similarity). The nlrp1 inflammasome polymeric complex associates with pycard/asc (PubMed:30150286). Interacts (via CARD domain) with pycard/asc (via CARD domain); leading to pro-inflammatory caspases (caspa and/or caspb) recruitment (PubMed:30150286). Pro-caspase-a and pro-caspase-b filament formation increases local enzyme concentration, resulting in trans-autocleavage and activation. Active caspa and caspb then processes il1b and il18 precursors, leading to the release of mature cytokines in the extracellular milieu and inflammatory response (By similarity).</text>
</comment>
<comment type="subcellular location">
    <subcellularLocation>
        <location evidence="5">Cytoplasm</location>
    </subcellularLocation>
    <text evidence="5">Co-localizes with pycard, caspa and caspb in the cytoplasm.</text>
</comment>
<comment type="subcellular location">
    <molecule>NACHT, LRR and PYD domains-containing protein 1, C-terminus</molecule>
    <subcellularLocation>
        <location evidence="5">Inflammasome</location>
    </subcellularLocation>
</comment>
<comment type="tissue specificity">
    <text evidence="5">Expressed in adult spleen, head kidney, gill and skin and also in the embryo.</text>
</comment>
<comment type="developmental stage">
    <text evidence="5">In the embryo, highest expression at 2 hours post-fertilization (hpf) with levels decreasing in later stages.</text>
</comment>
<comment type="induction">
    <text evidence="5">Up-regulated in response to infection with the bacteriim E.tarda.</text>
</comment>
<comment type="domain">
    <text evidence="5">The CARD domain is involved in the interaction with pycard.</text>
</comment>
<comment type="domain">
    <molecule>NACHT, LRR and PYD domains-containing protein 1, C-terminus</molecule>
    <text evidence="1">The C-terminal part of nlrp1 oligomerizes to form the core of the nlrp1 inflammasome filament: in the filament, the CARD domains form a central helical filaments that are promoted by oligomerized, but flexibly linked, UPA regions surrounding the filaments.</text>
</comment>
<comment type="PTM">
    <molecule>NACHT, LRR and PYD domains-containing protein 1 homolog</molecule>
    <text evidence="1">Autocatalytically cleaved. Autocatalytic cleavage in FIIND region occurs constitutively, prior to activation signals, and is required for inflammasome activity (IL1B release), possibly by facilitating pro-inflammatory caspases (caspa and/or caspb) binding. Both N- and C-terminal parts remain associated non-covalently.</text>
</comment>
<comment type="PTM">
    <molecule>NACHT, LRR and PYD domains-containing protein 1, N-terminus</molecule>
    <text evidence="1">Ubiquitinated in response to pathogen-associated signals, leading to its degradation by the proteasome and subsequent release of the cleaved C-terminal part of the protein (NACHT, LRR and PYD domains-containing protein 1, C-terminus), which polymerizes and forms the nlrp1 inflammasome.</text>
</comment>
<comment type="disruption phenotype">
    <text evidence="5">Morpholino knockdown in embryos 6 hours post-fertilization (hpf) results in reduced caspa and caspb activation following bacterial infection with E.tarda.</text>
</comment>
<comment type="similarity">
    <text evidence="7">Belongs to the NLRP family.</text>
</comment>
<dbReference type="EC" id="3.4.-.-" evidence="1"/>
<dbReference type="EMBL" id="MH118554">
    <property type="protein sequence ID" value="AYC80945.1"/>
    <property type="molecule type" value="mRNA"/>
</dbReference>
<dbReference type="EMBL" id="BX005331">
    <property type="status" value="NOT_ANNOTATED_CDS"/>
    <property type="molecule type" value="Genomic_DNA"/>
</dbReference>
<dbReference type="EMBL" id="CR450720">
    <property type="status" value="NOT_ANNOTATED_CDS"/>
    <property type="molecule type" value="Genomic_DNA"/>
</dbReference>
<dbReference type="RefSeq" id="NP_001410790.1">
    <property type="nucleotide sequence ID" value="NM_001423861.1"/>
</dbReference>
<dbReference type="RefSeq" id="XP_009297081.1">
    <property type="nucleotide sequence ID" value="XM_009298806.2"/>
</dbReference>
<dbReference type="SMR" id="A0A386CAB9"/>
<dbReference type="ComplexPortal" id="CPX-4947">
    <property type="entry name" value="NLRP1 inflammasome, variant 1"/>
</dbReference>
<dbReference type="ComplexPortal" id="CPX-4948">
    <property type="entry name" value="NLRP1 inflammasome, variant 2"/>
</dbReference>
<dbReference type="FunCoup" id="A0A386CAB9">
    <property type="interactions" value="183"/>
</dbReference>
<dbReference type="STRING" id="7955.ENSDARP00000126513"/>
<dbReference type="PaxDb" id="7955-ENSDARP00000126513"/>
<dbReference type="GeneID" id="101882558"/>
<dbReference type="AGR" id="ZFIN:ZDB-GENE-120709-59"/>
<dbReference type="ZFIN" id="ZDB-GENE-120709-59">
    <property type="gene designation" value="nlrp1"/>
</dbReference>
<dbReference type="eggNOG" id="ENOG502QS9E">
    <property type="taxonomic scope" value="Eukaryota"/>
</dbReference>
<dbReference type="HOGENOM" id="CLU_002274_2_4_1"/>
<dbReference type="InParanoid" id="A0A386CAB9"/>
<dbReference type="OrthoDB" id="8869108at2759"/>
<dbReference type="Reactome" id="R-DRE-844456">
    <property type="pathway name" value="The NLRP3 inflammasome"/>
</dbReference>
<dbReference type="PRO" id="PR:A0A386CAB9"/>
<dbReference type="Proteomes" id="UP000000437">
    <property type="component" value="Alternate scaffold 2"/>
</dbReference>
<dbReference type="Proteomes" id="UP000000437">
    <property type="component" value="Chromosome 2"/>
</dbReference>
<dbReference type="GO" id="GO:0061702">
    <property type="term" value="C:canonical inflammasome complex"/>
    <property type="evidence" value="ECO:0000353"/>
    <property type="project" value="ZFIN"/>
</dbReference>
<dbReference type="GO" id="GO:0005737">
    <property type="term" value="C:cytoplasm"/>
    <property type="evidence" value="ECO:0000318"/>
    <property type="project" value="GO_Central"/>
</dbReference>
<dbReference type="GO" id="GO:0072558">
    <property type="term" value="C:NLRP1 inflammasome complex"/>
    <property type="evidence" value="ECO:0000314"/>
    <property type="project" value="ComplexPortal"/>
</dbReference>
<dbReference type="GO" id="GO:0005524">
    <property type="term" value="F:ATP binding"/>
    <property type="evidence" value="ECO:0007669"/>
    <property type="project" value="UniProtKB-KW"/>
</dbReference>
<dbReference type="GO" id="GO:0008233">
    <property type="term" value="F:peptidase activity"/>
    <property type="evidence" value="ECO:0007669"/>
    <property type="project" value="UniProtKB-KW"/>
</dbReference>
<dbReference type="GO" id="GO:0006954">
    <property type="term" value="P:inflammatory response"/>
    <property type="evidence" value="ECO:0007669"/>
    <property type="project" value="UniProtKB-KW"/>
</dbReference>
<dbReference type="GO" id="GO:0045087">
    <property type="term" value="P:innate immune response"/>
    <property type="evidence" value="ECO:0007669"/>
    <property type="project" value="UniProtKB-KW"/>
</dbReference>
<dbReference type="GO" id="GO:0002221">
    <property type="term" value="P:pattern recognition receptor signaling pathway"/>
    <property type="evidence" value="ECO:0000303"/>
    <property type="project" value="ComplexPortal"/>
</dbReference>
<dbReference type="GO" id="GO:0050729">
    <property type="term" value="P:positive regulation of inflammatory response"/>
    <property type="evidence" value="ECO:0000303"/>
    <property type="project" value="ComplexPortal"/>
</dbReference>
<dbReference type="GO" id="GO:0032731">
    <property type="term" value="P:positive regulation of interleukin-1 beta production"/>
    <property type="evidence" value="ECO:0000303"/>
    <property type="project" value="ComplexPortal"/>
</dbReference>
<dbReference type="GO" id="GO:0012501">
    <property type="term" value="P:programmed cell death"/>
    <property type="evidence" value="ECO:0007669"/>
    <property type="project" value="UniProtKB-KW"/>
</dbReference>
<dbReference type="GO" id="GO:0006508">
    <property type="term" value="P:proteolysis"/>
    <property type="evidence" value="ECO:0007669"/>
    <property type="project" value="UniProtKB-KW"/>
</dbReference>
<dbReference type="GO" id="GO:0042981">
    <property type="term" value="P:regulation of apoptotic process"/>
    <property type="evidence" value="ECO:0007669"/>
    <property type="project" value="InterPro"/>
</dbReference>
<dbReference type="Gene3D" id="1.10.533.10">
    <property type="entry name" value="Death Domain, Fas"/>
    <property type="match status" value="1"/>
</dbReference>
<dbReference type="Gene3D" id="3.40.50.300">
    <property type="entry name" value="P-loop containing nucleotide triphosphate hydrolases"/>
    <property type="match status" value="1"/>
</dbReference>
<dbReference type="Gene3D" id="3.80.10.10">
    <property type="entry name" value="Ribonuclease Inhibitor"/>
    <property type="match status" value="1"/>
</dbReference>
<dbReference type="InterPro" id="IPR001315">
    <property type="entry name" value="CARD"/>
</dbReference>
<dbReference type="InterPro" id="IPR011029">
    <property type="entry name" value="DEATH-like_dom_sf"/>
</dbReference>
<dbReference type="InterPro" id="IPR025307">
    <property type="entry name" value="FIIND_dom"/>
</dbReference>
<dbReference type="InterPro" id="IPR032675">
    <property type="entry name" value="LRR_dom_sf"/>
</dbReference>
<dbReference type="InterPro" id="IPR007111">
    <property type="entry name" value="NACHT_NTPase"/>
</dbReference>
<dbReference type="InterPro" id="IPR041267">
    <property type="entry name" value="NLRP_HD2"/>
</dbReference>
<dbReference type="InterPro" id="IPR050637">
    <property type="entry name" value="NLRP_innate_immun_reg"/>
</dbReference>
<dbReference type="InterPro" id="IPR041075">
    <property type="entry name" value="NOD1/2_WH"/>
</dbReference>
<dbReference type="InterPro" id="IPR027417">
    <property type="entry name" value="P-loop_NTPase"/>
</dbReference>
<dbReference type="PANTHER" id="PTHR45690">
    <property type="entry name" value="NACHT, LRR AND PYD DOMAINS-CONTAINING PROTEIN 12"/>
    <property type="match status" value="1"/>
</dbReference>
<dbReference type="PANTHER" id="PTHR45690:SF19">
    <property type="entry name" value="NACHT, LRR AND PYD DOMAINS-CONTAINING PROTEIN 3"/>
    <property type="match status" value="1"/>
</dbReference>
<dbReference type="Pfam" id="PF00619">
    <property type="entry name" value="CARD"/>
    <property type="match status" value="1"/>
</dbReference>
<dbReference type="Pfam" id="PF13553">
    <property type="entry name" value="FIIND"/>
    <property type="match status" value="1"/>
</dbReference>
<dbReference type="Pfam" id="PF05729">
    <property type="entry name" value="NACHT"/>
    <property type="match status" value="1"/>
</dbReference>
<dbReference type="Pfam" id="PF17776">
    <property type="entry name" value="NLRC4_HD2"/>
    <property type="match status" value="1"/>
</dbReference>
<dbReference type="Pfam" id="PF17779">
    <property type="entry name" value="NOD2_WH"/>
    <property type="match status" value="1"/>
</dbReference>
<dbReference type="Pfam" id="PF23679">
    <property type="entry name" value="UPA-FIIND"/>
    <property type="match status" value="1"/>
</dbReference>
<dbReference type="SUPFAM" id="SSF47986">
    <property type="entry name" value="DEATH domain"/>
    <property type="match status" value="1"/>
</dbReference>
<dbReference type="SUPFAM" id="SSF52540">
    <property type="entry name" value="P-loop containing nucleoside triphosphate hydrolases"/>
    <property type="match status" value="1"/>
</dbReference>
<dbReference type="SUPFAM" id="SSF52047">
    <property type="entry name" value="RNI-like"/>
    <property type="match status" value="1"/>
</dbReference>
<dbReference type="PROSITE" id="PS50209">
    <property type="entry name" value="CARD"/>
    <property type="match status" value="1"/>
</dbReference>
<dbReference type="PROSITE" id="PS51830">
    <property type="entry name" value="FIIND"/>
    <property type="match status" value="1"/>
</dbReference>
<dbReference type="PROSITE" id="PS50837">
    <property type="entry name" value="NACHT"/>
    <property type="match status" value="1"/>
</dbReference>
<evidence type="ECO:0000250" key="1">
    <source>
        <dbReference type="UniProtKB" id="Q9C000"/>
    </source>
</evidence>
<evidence type="ECO:0000255" key="2">
    <source>
        <dbReference type="PROSITE-ProRule" id="PRU00046"/>
    </source>
</evidence>
<evidence type="ECO:0000255" key="3">
    <source>
        <dbReference type="PROSITE-ProRule" id="PRU00136"/>
    </source>
</evidence>
<evidence type="ECO:0000255" key="4">
    <source>
        <dbReference type="PROSITE-ProRule" id="PRU01174"/>
    </source>
</evidence>
<evidence type="ECO:0000269" key="5">
    <source>
    </source>
</evidence>
<evidence type="ECO:0000303" key="6">
    <source>
    </source>
</evidence>
<evidence type="ECO:0000305" key="7"/>
<evidence type="ECO:0000312" key="8">
    <source>
        <dbReference type="EMBL" id="AYC80945.1"/>
    </source>
</evidence>
<evidence type="ECO:0000312" key="9">
    <source>
        <dbReference type="Proteomes" id="UP000000437"/>
    </source>
</evidence>
<accession>A0A386CAB9</accession>
<accession>K7DYI4</accession>
<name>NLRP1_DANRE</name>
<feature type="chain" id="PRO_0000448789" description="NACHT, LRR and PYD domains-containing protein 1 homolog">
    <location>
        <begin position="1"/>
        <end position="1355"/>
    </location>
</feature>
<feature type="chain" id="PRO_0000452861" description="NACHT, LRR and PYD domains-containing protein 1, N-terminus" evidence="1">
    <location>
        <begin position="1"/>
        <end position="1109"/>
    </location>
</feature>
<feature type="chain" id="PRO_0000452862" description="NACHT, LRR and PYD domains-containing protein 1, C-terminus" evidence="1">
    <location>
        <begin position="1110"/>
        <end position="1182"/>
    </location>
</feature>
<feature type="domain" description="NACHT" evidence="3">
    <location>
        <begin position="257"/>
        <end position="458"/>
    </location>
</feature>
<feature type="domain" description="FIIND" evidence="4">
    <location>
        <begin position="977"/>
        <end position="1252"/>
    </location>
</feature>
<feature type="domain" description="CARD" evidence="2">
    <location>
        <begin position="1278"/>
        <end position="1354"/>
    </location>
</feature>
<feature type="region of interest" description="ZU5" evidence="1">
    <location>
        <begin position="977"/>
        <end position="1109"/>
    </location>
</feature>
<feature type="region of interest" description="UPA" evidence="1">
    <location>
        <begin position="1110"/>
        <end position="1252"/>
    </location>
</feature>
<feature type="binding site" evidence="3">
    <location>
        <begin position="263"/>
        <end position="270"/>
    </location>
    <ligand>
        <name>ATP</name>
        <dbReference type="ChEBI" id="CHEBI:30616"/>
    </ligand>
</feature>
<feature type="site" description="Cleavage; by autolysis" evidence="1 4">
    <location>
        <begin position="1109"/>
        <end position="1110"/>
    </location>
</feature>
<sequence length="1355" mass="154257">MSSDYTDRNNLASAIKTLGDMLEKDEAFQRLMYNASTKGEINRGRVNKVFLKALLSAGDKVGEFLNELIDHLNLFKVLGDFSWNPPVLKEAELNERTSQLRTQQHKYVERVSGFSHYGFGETGTPARGDITSPRGPQVASIEEDLATSKLAELLLAVGDHLEKIEKKGQFLPENVERFSLDCFITSESVKLSSEAVELAPCYTEPVIIQRSKEQTEKYCQEYVRSPHTSSHLLSNDKTQSIRIGQLFSPDSDGNTPKTVILCGDSGRGKSFVLEKIILDWVHLEHHFENFDAVFLLKYEELKCLSEEMSLTELLSRSCSLTSDQISQILQLTPEKVLFLIDGIDDFSFNAHIQISSPTDPSQKAPVISIIHCLMRDLLLVESSVIVTTRYTAAAELSSLCKRPQRFTEIEGFSERRVQEYFQKFFQDEQLFKKAYESMKTNETLLTFCSVPLLCWMVCFCLKKDADQVMTELKTTTSIYVHFVSTLLEDHHQSQSFLRSLGQLAEEGMKNRQNLFDEKSVTRTGLDPATRVFMNKIYLKRKKKHELLFKFKHLSFQEFFAALYYIMLDEEESWCKVSELFNMMESEALIHRSPPIFRGRLSNPIPSVMMFLCGLFNKKVSSSLFEKMKSTFSHNVKLKKKELKKKLMKMIPAMIRQYGFELFALHCLYELQDERFVTKVLETHKFIDLSNVSLRSTDCLVLCYCLRLCPNIRELNFMNCDLTAAKLKILQPALGLCETLRFSVEHLSEIGDLIQILSESKILRELKVREDEYGVESPRWSFNLSVTRGDVLLTLSSSEKNPSFSSVLNIRLTCAQSQISRTDWTLFLQRLRKTGTLTEDSSADDDHVSLQLSSLHSVGLKSLDLTLVSLNESWASGIISLIQNCTSLQQLKVSVTGLLLEEGLKLLKKSLTDPHCTVIIEGRRNCSEPSEEHLRQSYEKVEIHFKPKLLEELAELSICNPGSSALNIHCQSCVDVADSDQWVQVEPSVCRGEGGTEFRITTPAGRFQCSRTRMRWVCDGDVTLHYRAVDGHFLNAELERLQCERVAPVLDVNVISGKLEEAHLPHYMCLAESDPALTNAVKLLSVEDEGISLESVELTRFHAKILQPMFSPKTVLVKLGIPVKVHCDLLIFMTHTCPIILNVYFFPSDSLVEENIKTEEKSSHQIKCSRPEAPLQMKKQHSLEVPDAVVQPEAIKLRGNMKPNFFQVKQPVVNDITMILSRVDDQKSVWTGTIWKKLIDIKLNKTESDLFQSGQKHKTSQPAHSFDKAQFFDTHWCNLIKSVENVDTVADKLLQKQIIHEQFYSEIIHHKSTSEESMRKICVIVRKGSAAVKEIFISILLQENPNLLNHLPSSDS</sequence>